<comment type="function">
    <text evidence="1">DNA-dependent RNA polymerase catalyzes the transcription of DNA into RNA using the four ribonucleoside triphosphates as substrates.</text>
</comment>
<comment type="catalytic activity">
    <reaction evidence="1">
        <text>RNA(n) + a ribonucleoside 5'-triphosphate = RNA(n+1) + diphosphate</text>
        <dbReference type="Rhea" id="RHEA:21248"/>
        <dbReference type="Rhea" id="RHEA-COMP:14527"/>
        <dbReference type="Rhea" id="RHEA-COMP:17342"/>
        <dbReference type="ChEBI" id="CHEBI:33019"/>
        <dbReference type="ChEBI" id="CHEBI:61557"/>
        <dbReference type="ChEBI" id="CHEBI:140395"/>
        <dbReference type="EC" id="2.7.7.6"/>
    </reaction>
</comment>
<comment type="subunit">
    <text evidence="1">The RNAP catalytic core consists of 2 alpha, 1 beta, 1 beta' and 1 omega subunit. When a sigma factor is associated with the core the holoenzyme is formed, which can initiate transcription.</text>
</comment>
<comment type="similarity">
    <text evidence="1">Belongs to the RNA polymerase beta chain family.</text>
</comment>
<keyword id="KW-0240">DNA-directed RNA polymerase</keyword>
<keyword id="KW-0548">Nucleotidyltransferase</keyword>
<keyword id="KW-0804">Transcription</keyword>
<keyword id="KW-0808">Transferase</keyword>
<sequence>MVYSYTEKKRIRKDFGKRPQVLDVPYLLSIQLDSFQKFIEQDPEGQYGLEAAFRSVFPIQSYSGNSELQYVSYRLGEPVFDVQECQIRGVTYSAPLRVKLRLVIYEREAPEGTVKDIKEQEVYMGEIPLMTDNGTFVINGTERVIVSQLHRSPGVFFDSDKGKTHSSGKVLYNARIIPYRGSWLDFEFDPKDNLFVRIDRRRKLPATIILRALNYTTEQILDLFFEKVVFEIRDNKLQMELIPERLRGETASFDIEANGKVYVEKGRRITARHIRQLEKDDIKHIEVPVEYIAGKVVSKDYVDESTGELICAANMELSLDLLAKLSQSGHKRIETLFTNDLDHGPYISETVRVDPTNDRLSALVEIYRMMRPGEPPTREAAESLFENLFFSEDRYDLSAVGRMKFNRSLLRDEIEGSGILSKDDIIDVMKKLIDIRNGKGEVDDIDHLGNRRIRSVGEMAENQFRVGLVRVERAVKERLSLGDLDTLMPQDMINAKPISAAVKEFFGSSQLSQFMDQNNPLSEITHKRRISALGPGGLTRERAGFEVRDVHPTHYGRVCPIETPEGPNIGLINSLSVYAQTNEYGFLETPYRRVVDGVVTDEIHYLSAIEEGNYVIAQANSNLDDEGHFVEDLVTCRSKGESSLFSRDQVDYMDVSTQQVVSVGASLIPFLEHDDANRALMGANMQRQAVPTLRADKPLVGTGMERAVAVDSGVTAVAKRGGTVQYVDASRIVIKVNEDEMYPGEAGIDIYNLTKYTRSNQNTCINQMPCVSLGEPVERGDVLADGPSTDLGELALGQNMRVAFMPWNGYNFEDSILVSERVVQEDRFTTIHIQELACVSRDTKLGPEEITADIPNVGEAALSKLDESGIVYIGAEVTGGDILVGKVTPKGETQLTPEEKLLRAIFGEKASDVKDSSLRVPNGVSGTVIDVQVFTRDGVEKDKRALEIEEMQLKQAKKDLSEELQILEAGLFSRIRAVLVSGGVEAEKLDKLPRDRWLELGLTDEEKQNQLEQLAEQYDELKHEFEKKLEAKRRKITQGDDLAPGVLKIVKVYLAVKRRIQPGDKMAGRHGNKGVISKINPIEDMPYDENGTPVDIVLNPLGVPSRMNIGQILETHLGMAAKGIGDKINAMLKQQQEVAKLREFIQRAYDLGADVRQKVDLSTFSDDEVLRLAENLRKGMPIATPVFDGAKEAEIKELLKLGDLPTSGQITLFDGRTGEQFERPVTVGYMYMLKLNHLVDDKMHARSTGSYSLVTQQPLGGKAQFGGQRFGEMEVWALEAYGAAYTLQEMLTVKSDDVNGRTKMYKNIVDGNHQMEPGMPESFNVLLKEIRSLGINIELEDE</sequence>
<protein>
    <recommendedName>
        <fullName evidence="1">DNA-directed RNA polymerase subunit beta</fullName>
        <shortName evidence="1">RNAP subunit beta</shortName>
        <ecNumber evidence="1">2.7.7.6</ecNumber>
    </recommendedName>
    <alternativeName>
        <fullName evidence="1">RNA polymerase subunit beta</fullName>
    </alternativeName>
    <alternativeName>
        <fullName evidence="1">Transcriptase subunit beta</fullName>
    </alternativeName>
</protein>
<gene>
    <name evidence="1" type="primary">rpoB</name>
    <name type="ordered locus">SeD_A4560</name>
</gene>
<name>RPOB_SALDC</name>
<proteinExistence type="inferred from homology"/>
<reference key="1">
    <citation type="journal article" date="2011" name="J. Bacteriol.">
        <title>Comparative genomics of 28 Salmonella enterica isolates: evidence for CRISPR-mediated adaptive sublineage evolution.</title>
        <authorList>
            <person name="Fricke W.F."/>
            <person name="Mammel M.K."/>
            <person name="McDermott P.F."/>
            <person name="Tartera C."/>
            <person name="White D.G."/>
            <person name="Leclerc J.E."/>
            <person name="Ravel J."/>
            <person name="Cebula T.A."/>
        </authorList>
    </citation>
    <scope>NUCLEOTIDE SEQUENCE [LARGE SCALE GENOMIC DNA]</scope>
    <source>
        <strain>CT_02021853</strain>
    </source>
</reference>
<evidence type="ECO:0000255" key="1">
    <source>
        <dbReference type="HAMAP-Rule" id="MF_01321"/>
    </source>
</evidence>
<organism>
    <name type="scientific">Salmonella dublin (strain CT_02021853)</name>
    <dbReference type="NCBI Taxonomy" id="439851"/>
    <lineage>
        <taxon>Bacteria</taxon>
        <taxon>Pseudomonadati</taxon>
        <taxon>Pseudomonadota</taxon>
        <taxon>Gammaproteobacteria</taxon>
        <taxon>Enterobacterales</taxon>
        <taxon>Enterobacteriaceae</taxon>
        <taxon>Salmonella</taxon>
    </lineage>
</organism>
<feature type="chain" id="PRO_1000141730" description="DNA-directed RNA polymerase subunit beta">
    <location>
        <begin position="1"/>
        <end position="1342"/>
    </location>
</feature>
<dbReference type="EC" id="2.7.7.6" evidence="1"/>
<dbReference type="EMBL" id="CP001144">
    <property type="protein sequence ID" value="ACH74453.1"/>
    <property type="molecule type" value="Genomic_DNA"/>
</dbReference>
<dbReference type="RefSeq" id="WP_000263105.1">
    <property type="nucleotide sequence ID" value="NC_011205.1"/>
</dbReference>
<dbReference type="SMR" id="B5FQJ9"/>
<dbReference type="KEGG" id="sed:SeD_A4560"/>
<dbReference type="HOGENOM" id="CLU_000524_4_0_6"/>
<dbReference type="Proteomes" id="UP000008322">
    <property type="component" value="Chromosome"/>
</dbReference>
<dbReference type="GO" id="GO:0000428">
    <property type="term" value="C:DNA-directed RNA polymerase complex"/>
    <property type="evidence" value="ECO:0007669"/>
    <property type="project" value="UniProtKB-KW"/>
</dbReference>
<dbReference type="GO" id="GO:0003677">
    <property type="term" value="F:DNA binding"/>
    <property type="evidence" value="ECO:0007669"/>
    <property type="project" value="UniProtKB-UniRule"/>
</dbReference>
<dbReference type="GO" id="GO:0003899">
    <property type="term" value="F:DNA-directed RNA polymerase activity"/>
    <property type="evidence" value="ECO:0007669"/>
    <property type="project" value="UniProtKB-UniRule"/>
</dbReference>
<dbReference type="GO" id="GO:0032549">
    <property type="term" value="F:ribonucleoside binding"/>
    <property type="evidence" value="ECO:0007669"/>
    <property type="project" value="InterPro"/>
</dbReference>
<dbReference type="GO" id="GO:0006351">
    <property type="term" value="P:DNA-templated transcription"/>
    <property type="evidence" value="ECO:0007669"/>
    <property type="project" value="UniProtKB-UniRule"/>
</dbReference>
<dbReference type="CDD" id="cd00653">
    <property type="entry name" value="RNA_pol_B_RPB2"/>
    <property type="match status" value="1"/>
</dbReference>
<dbReference type="FunFam" id="2.30.150.10:FF:000001">
    <property type="entry name" value="DNA-directed RNA polymerase subunit beta"/>
    <property type="match status" value="1"/>
</dbReference>
<dbReference type="FunFam" id="2.40.270.10:FF:000003">
    <property type="entry name" value="DNA-directed RNA polymerase subunit beta"/>
    <property type="match status" value="1"/>
</dbReference>
<dbReference type="FunFam" id="2.40.270.10:FF:000004">
    <property type="entry name" value="DNA-directed RNA polymerase subunit beta"/>
    <property type="match status" value="1"/>
</dbReference>
<dbReference type="FunFam" id="2.40.50.100:FF:000006">
    <property type="entry name" value="DNA-directed RNA polymerase subunit beta"/>
    <property type="match status" value="1"/>
</dbReference>
<dbReference type="FunFam" id="2.40.50.150:FF:000001">
    <property type="entry name" value="DNA-directed RNA polymerase subunit beta"/>
    <property type="match status" value="1"/>
</dbReference>
<dbReference type="FunFam" id="3.90.1100.10:FF:000002">
    <property type="entry name" value="DNA-directed RNA polymerase subunit beta"/>
    <property type="match status" value="1"/>
</dbReference>
<dbReference type="FunFam" id="3.90.1110.10:FF:000001">
    <property type="entry name" value="DNA-directed RNA polymerase subunit beta"/>
    <property type="match status" value="1"/>
</dbReference>
<dbReference type="FunFam" id="3.90.1110.10:FF:000004">
    <property type="entry name" value="DNA-directed RNA polymerase subunit beta"/>
    <property type="match status" value="1"/>
</dbReference>
<dbReference type="FunFam" id="3.90.1800.10:FF:000001">
    <property type="entry name" value="DNA-directed RNA polymerase subunit beta"/>
    <property type="match status" value="1"/>
</dbReference>
<dbReference type="Gene3D" id="2.40.50.100">
    <property type="match status" value="1"/>
</dbReference>
<dbReference type="Gene3D" id="2.40.50.150">
    <property type="match status" value="1"/>
</dbReference>
<dbReference type="Gene3D" id="3.90.1100.10">
    <property type="match status" value="2"/>
</dbReference>
<dbReference type="Gene3D" id="6.10.140.1670">
    <property type="match status" value="1"/>
</dbReference>
<dbReference type="Gene3D" id="2.30.150.10">
    <property type="entry name" value="DNA-directed RNA polymerase, beta subunit, external 1 domain"/>
    <property type="match status" value="1"/>
</dbReference>
<dbReference type="Gene3D" id="2.40.270.10">
    <property type="entry name" value="DNA-directed RNA polymerase, subunit 2, domain 6"/>
    <property type="match status" value="1"/>
</dbReference>
<dbReference type="Gene3D" id="3.90.1800.10">
    <property type="entry name" value="RNA polymerase alpha subunit dimerisation domain"/>
    <property type="match status" value="1"/>
</dbReference>
<dbReference type="Gene3D" id="3.90.1110.10">
    <property type="entry name" value="RNA polymerase Rpb2, domain 2"/>
    <property type="match status" value="1"/>
</dbReference>
<dbReference type="HAMAP" id="MF_01321">
    <property type="entry name" value="RNApol_bact_RpoB"/>
    <property type="match status" value="1"/>
</dbReference>
<dbReference type="InterPro" id="IPR042107">
    <property type="entry name" value="DNA-dir_RNA_pol_bsu_ext_1_sf"/>
</dbReference>
<dbReference type="InterPro" id="IPR019462">
    <property type="entry name" value="DNA-dir_RNA_pol_bsu_external_1"/>
</dbReference>
<dbReference type="InterPro" id="IPR015712">
    <property type="entry name" value="DNA-dir_RNA_pol_su2"/>
</dbReference>
<dbReference type="InterPro" id="IPR007120">
    <property type="entry name" value="DNA-dir_RNAP_su2_dom"/>
</dbReference>
<dbReference type="InterPro" id="IPR037033">
    <property type="entry name" value="DNA-dir_RNAP_su2_hyb_sf"/>
</dbReference>
<dbReference type="InterPro" id="IPR010243">
    <property type="entry name" value="RNA_pol_bsu_bac"/>
</dbReference>
<dbReference type="InterPro" id="IPR007121">
    <property type="entry name" value="RNA_pol_bsu_CS"/>
</dbReference>
<dbReference type="InterPro" id="IPR007644">
    <property type="entry name" value="RNA_pol_bsu_protrusion"/>
</dbReference>
<dbReference type="InterPro" id="IPR007642">
    <property type="entry name" value="RNA_pol_Rpb2_2"/>
</dbReference>
<dbReference type="InterPro" id="IPR037034">
    <property type="entry name" value="RNA_pol_Rpb2_2_sf"/>
</dbReference>
<dbReference type="InterPro" id="IPR007645">
    <property type="entry name" value="RNA_pol_Rpb2_3"/>
</dbReference>
<dbReference type="InterPro" id="IPR007641">
    <property type="entry name" value="RNA_pol_Rpb2_7"/>
</dbReference>
<dbReference type="InterPro" id="IPR014724">
    <property type="entry name" value="RNA_pol_RPB2_OB-fold"/>
</dbReference>
<dbReference type="NCBIfam" id="NF001616">
    <property type="entry name" value="PRK00405.1"/>
    <property type="match status" value="1"/>
</dbReference>
<dbReference type="NCBIfam" id="TIGR02013">
    <property type="entry name" value="rpoB"/>
    <property type="match status" value="1"/>
</dbReference>
<dbReference type="PANTHER" id="PTHR20856">
    <property type="entry name" value="DNA-DIRECTED RNA POLYMERASE I SUBUNIT 2"/>
    <property type="match status" value="1"/>
</dbReference>
<dbReference type="Pfam" id="PF04563">
    <property type="entry name" value="RNA_pol_Rpb2_1"/>
    <property type="match status" value="1"/>
</dbReference>
<dbReference type="Pfam" id="PF04561">
    <property type="entry name" value="RNA_pol_Rpb2_2"/>
    <property type="match status" value="2"/>
</dbReference>
<dbReference type="Pfam" id="PF04565">
    <property type="entry name" value="RNA_pol_Rpb2_3"/>
    <property type="match status" value="1"/>
</dbReference>
<dbReference type="Pfam" id="PF10385">
    <property type="entry name" value="RNA_pol_Rpb2_45"/>
    <property type="match status" value="1"/>
</dbReference>
<dbReference type="Pfam" id="PF00562">
    <property type="entry name" value="RNA_pol_Rpb2_6"/>
    <property type="match status" value="1"/>
</dbReference>
<dbReference type="Pfam" id="PF04560">
    <property type="entry name" value="RNA_pol_Rpb2_7"/>
    <property type="match status" value="1"/>
</dbReference>
<dbReference type="SUPFAM" id="SSF64484">
    <property type="entry name" value="beta and beta-prime subunits of DNA dependent RNA-polymerase"/>
    <property type="match status" value="1"/>
</dbReference>
<dbReference type="PROSITE" id="PS01166">
    <property type="entry name" value="RNA_POL_BETA"/>
    <property type="match status" value="1"/>
</dbReference>
<accession>B5FQJ9</accession>